<dbReference type="EMBL" id="CP000814">
    <property type="protein sequence ID" value="ABV52645.1"/>
    <property type="molecule type" value="Genomic_DNA"/>
</dbReference>
<dbReference type="RefSeq" id="WP_002852861.1">
    <property type="nucleotide sequence ID" value="NC_009839.1"/>
</dbReference>
<dbReference type="SMR" id="A8FMF8"/>
<dbReference type="KEGG" id="cju:C8J_1046"/>
<dbReference type="HOGENOM" id="CLU_108953_3_1_7"/>
<dbReference type="GO" id="GO:0005829">
    <property type="term" value="C:cytosol"/>
    <property type="evidence" value="ECO:0007669"/>
    <property type="project" value="TreeGrafter"/>
</dbReference>
<dbReference type="GO" id="GO:0003723">
    <property type="term" value="F:RNA binding"/>
    <property type="evidence" value="ECO:0007669"/>
    <property type="project" value="UniProtKB-UniRule"/>
</dbReference>
<dbReference type="GO" id="GO:0070929">
    <property type="term" value="P:trans-translation"/>
    <property type="evidence" value="ECO:0007669"/>
    <property type="project" value="UniProtKB-UniRule"/>
</dbReference>
<dbReference type="CDD" id="cd09294">
    <property type="entry name" value="SmpB"/>
    <property type="match status" value="1"/>
</dbReference>
<dbReference type="Gene3D" id="2.40.280.10">
    <property type="match status" value="1"/>
</dbReference>
<dbReference type="HAMAP" id="MF_00023">
    <property type="entry name" value="SmpB"/>
    <property type="match status" value="1"/>
</dbReference>
<dbReference type="InterPro" id="IPR023620">
    <property type="entry name" value="SmpB"/>
</dbReference>
<dbReference type="InterPro" id="IPR000037">
    <property type="entry name" value="SsrA-bd_prot"/>
</dbReference>
<dbReference type="NCBIfam" id="NF003843">
    <property type="entry name" value="PRK05422.1"/>
    <property type="match status" value="1"/>
</dbReference>
<dbReference type="NCBIfam" id="TIGR00086">
    <property type="entry name" value="smpB"/>
    <property type="match status" value="1"/>
</dbReference>
<dbReference type="PANTHER" id="PTHR30308:SF2">
    <property type="entry name" value="SSRA-BINDING PROTEIN"/>
    <property type="match status" value="1"/>
</dbReference>
<dbReference type="PANTHER" id="PTHR30308">
    <property type="entry name" value="TMRNA-BINDING COMPONENT OF TRANS-TRANSLATION TAGGING COMPLEX"/>
    <property type="match status" value="1"/>
</dbReference>
<dbReference type="Pfam" id="PF01668">
    <property type="entry name" value="SmpB"/>
    <property type="match status" value="1"/>
</dbReference>
<dbReference type="SUPFAM" id="SSF74982">
    <property type="entry name" value="Small protein B (SmpB)"/>
    <property type="match status" value="1"/>
</dbReference>
<feature type="chain" id="PRO_1000071004" description="SsrA-binding protein">
    <location>
        <begin position="1"/>
        <end position="150"/>
    </location>
</feature>
<accession>A8FMF8</accession>
<keyword id="KW-0963">Cytoplasm</keyword>
<keyword id="KW-0694">RNA-binding</keyword>
<proteinExistence type="inferred from homology"/>
<gene>
    <name evidence="1" type="primary">smpB</name>
    <name type="ordered locus">C8J_1046</name>
</gene>
<reference key="1">
    <citation type="journal article" date="2007" name="J. Bacteriol.">
        <title>The complete genome sequence of Campylobacter jejuni strain 81116 (NCTC11828).</title>
        <authorList>
            <person name="Pearson B.M."/>
            <person name="Gaskin D.J.H."/>
            <person name="Segers R.P.A.M."/>
            <person name="Wells J.M."/>
            <person name="Nuijten P.J.M."/>
            <person name="van Vliet A.H.M."/>
        </authorList>
    </citation>
    <scope>NUCLEOTIDE SEQUENCE [LARGE SCALE GENOMIC DNA]</scope>
    <source>
        <strain>81116 / NCTC 11828</strain>
    </source>
</reference>
<protein>
    <recommendedName>
        <fullName evidence="1">SsrA-binding protein</fullName>
    </recommendedName>
    <alternativeName>
        <fullName evidence="1">Small protein B</fullName>
    </alternativeName>
</protein>
<name>SSRP_CAMJ8</name>
<evidence type="ECO:0000255" key="1">
    <source>
        <dbReference type="HAMAP-Rule" id="MF_00023"/>
    </source>
</evidence>
<sequence>MKIIARNKKALFDYSIIERFEAGIVLKGSEVVALRAGRANLKDSFVRIIKNEIFLLNSHISLLHTTHSFYKHEERGARKLLMHRKQIDKLLGKVSIEGYTIVALDLYFNTKNKVKATLALAKGKNLHDKRETLKKKQADLEARAAMKNYK</sequence>
<comment type="function">
    <text evidence="1">Required for rescue of stalled ribosomes mediated by trans-translation. Binds to transfer-messenger RNA (tmRNA), required for stable association of tmRNA with ribosomes. tmRNA and SmpB together mimic tRNA shape, replacing the anticodon stem-loop with SmpB. tmRNA is encoded by the ssrA gene; the 2 termini fold to resemble tRNA(Ala) and it encodes a 'tag peptide', a short internal open reading frame. During trans-translation Ala-aminoacylated tmRNA acts like a tRNA, entering the A-site of stalled ribosomes, displacing the stalled mRNA. The ribosome then switches to translate the ORF on the tmRNA; the nascent peptide is terminated with the 'tag peptide' encoded by the tmRNA and targeted for degradation. The ribosome is freed to recommence translation, which seems to be the essential function of trans-translation.</text>
</comment>
<comment type="subcellular location">
    <subcellularLocation>
        <location evidence="1">Cytoplasm</location>
    </subcellularLocation>
    <text evidence="1">The tmRNA-SmpB complex associates with stalled 70S ribosomes.</text>
</comment>
<comment type="similarity">
    <text evidence="1">Belongs to the SmpB family.</text>
</comment>
<organism>
    <name type="scientific">Campylobacter jejuni subsp. jejuni serotype O:6 (strain 81116 / NCTC 11828)</name>
    <dbReference type="NCBI Taxonomy" id="407148"/>
    <lineage>
        <taxon>Bacteria</taxon>
        <taxon>Pseudomonadati</taxon>
        <taxon>Campylobacterota</taxon>
        <taxon>Epsilonproteobacteria</taxon>
        <taxon>Campylobacterales</taxon>
        <taxon>Campylobacteraceae</taxon>
        <taxon>Campylobacter</taxon>
    </lineage>
</organism>